<dbReference type="EMBL" id="CP001338">
    <property type="protein sequence ID" value="ACL17294.1"/>
    <property type="molecule type" value="Genomic_DNA"/>
</dbReference>
<dbReference type="RefSeq" id="WP_012618613.1">
    <property type="nucleotide sequence ID" value="NC_011832.1"/>
</dbReference>
<dbReference type="SMR" id="B8GDE3"/>
<dbReference type="STRING" id="521011.Mpal_1991"/>
<dbReference type="GeneID" id="7270797"/>
<dbReference type="KEGG" id="mpl:Mpal_1991"/>
<dbReference type="eggNOG" id="arCOG00105">
    <property type="taxonomic scope" value="Archaea"/>
</dbReference>
<dbReference type="HOGENOM" id="CLU_019250_2_2_2"/>
<dbReference type="OrthoDB" id="53136at2157"/>
<dbReference type="UniPathway" id="UPA00148"/>
<dbReference type="Proteomes" id="UP000002457">
    <property type="component" value="Chromosome"/>
</dbReference>
<dbReference type="GO" id="GO:0015420">
    <property type="term" value="F:ABC-type vitamin B12 transporter activity"/>
    <property type="evidence" value="ECO:0007669"/>
    <property type="project" value="UniProtKB-UniRule"/>
</dbReference>
<dbReference type="GO" id="GO:0003824">
    <property type="term" value="F:catalytic activity"/>
    <property type="evidence" value="ECO:0007669"/>
    <property type="project" value="InterPro"/>
</dbReference>
<dbReference type="GO" id="GO:0009236">
    <property type="term" value="P:cobalamin biosynthetic process"/>
    <property type="evidence" value="ECO:0007669"/>
    <property type="project" value="UniProtKB-UniRule"/>
</dbReference>
<dbReference type="CDD" id="cd05389">
    <property type="entry name" value="CobQ_N"/>
    <property type="match status" value="1"/>
</dbReference>
<dbReference type="CDD" id="cd01750">
    <property type="entry name" value="GATase1_CobQ"/>
    <property type="match status" value="1"/>
</dbReference>
<dbReference type="Gene3D" id="3.40.50.880">
    <property type="match status" value="1"/>
</dbReference>
<dbReference type="Gene3D" id="3.40.50.300">
    <property type="entry name" value="P-loop containing nucleotide triphosphate hydrolases"/>
    <property type="match status" value="1"/>
</dbReference>
<dbReference type="HAMAP" id="MF_00028">
    <property type="entry name" value="CobQ"/>
    <property type="match status" value="1"/>
</dbReference>
<dbReference type="InterPro" id="IPR029062">
    <property type="entry name" value="Class_I_gatase-like"/>
</dbReference>
<dbReference type="InterPro" id="IPR002586">
    <property type="entry name" value="CobQ/CobB/MinD/ParA_Nub-bd_dom"/>
</dbReference>
<dbReference type="InterPro" id="IPR033949">
    <property type="entry name" value="CobQ_GATase1"/>
</dbReference>
<dbReference type="InterPro" id="IPR047045">
    <property type="entry name" value="CobQ_N"/>
</dbReference>
<dbReference type="InterPro" id="IPR004459">
    <property type="entry name" value="CobQ_synth"/>
</dbReference>
<dbReference type="InterPro" id="IPR011698">
    <property type="entry name" value="GATase_3"/>
</dbReference>
<dbReference type="InterPro" id="IPR027417">
    <property type="entry name" value="P-loop_NTPase"/>
</dbReference>
<dbReference type="NCBIfam" id="TIGR00313">
    <property type="entry name" value="cobQ"/>
    <property type="match status" value="1"/>
</dbReference>
<dbReference type="NCBIfam" id="NF001989">
    <property type="entry name" value="PRK00784.1"/>
    <property type="match status" value="1"/>
</dbReference>
<dbReference type="PANTHER" id="PTHR21343:SF1">
    <property type="entry name" value="COBYRIC ACID SYNTHASE"/>
    <property type="match status" value="1"/>
</dbReference>
<dbReference type="PANTHER" id="PTHR21343">
    <property type="entry name" value="DETHIOBIOTIN SYNTHETASE"/>
    <property type="match status" value="1"/>
</dbReference>
<dbReference type="Pfam" id="PF01656">
    <property type="entry name" value="CbiA"/>
    <property type="match status" value="1"/>
</dbReference>
<dbReference type="Pfam" id="PF07685">
    <property type="entry name" value="GATase_3"/>
    <property type="match status" value="1"/>
</dbReference>
<dbReference type="SUPFAM" id="SSF52317">
    <property type="entry name" value="Class I glutamine amidotransferase-like"/>
    <property type="match status" value="1"/>
</dbReference>
<dbReference type="SUPFAM" id="SSF52540">
    <property type="entry name" value="P-loop containing nucleoside triphosphate hydrolases"/>
    <property type="match status" value="1"/>
</dbReference>
<dbReference type="PROSITE" id="PS51274">
    <property type="entry name" value="GATASE_COBBQ"/>
    <property type="match status" value="1"/>
</dbReference>
<keyword id="KW-0169">Cobalamin biosynthesis</keyword>
<keyword id="KW-0315">Glutamine amidotransferase</keyword>
<keyword id="KW-1185">Reference proteome</keyword>
<feature type="chain" id="PRO_1000116909" description="Probable cobyric acid synthase">
    <location>
        <begin position="1"/>
        <end position="487"/>
    </location>
</feature>
<feature type="domain" description="GATase cobBQ-type" evidence="1">
    <location>
        <begin position="246"/>
        <end position="431"/>
    </location>
</feature>
<feature type="active site" description="Nucleophile" evidence="1">
    <location>
        <position position="325"/>
    </location>
</feature>
<feature type="active site" evidence="1">
    <location>
        <position position="423"/>
    </location>
</feature>
<protein>
    <recommendedName>
        <fullName evidence="1">Probable cobyric acid synthase</fullName>
    </recommendedName>
</protein>
<comment type="function">
    <text evidence="1">Catalyzes amidations at positions B, D, E, and G on adenosylcobyrinic A,C-diamide. NH(2) groups are provided by glutamine, and one molecule of ATP is hydrogenolyzed for each amidation.</text>
</comment>
<comment type="pathway">
    <text evidence="1">Cofactor biosynthesis; adenosylcobalamin biosynthesis.</text>
</comment>
<comment type="similarity">
    <text evidence="1">Belongs to the CobB/CobQ family. CobQ subfamily.</text>
</comment>
<accession>B8GDE3</accession>
<gene>
    <name evidence="1" type="primary">cobQ</name>
    <name type="ordered locus">Mpal_1991</name>
</gene>
<sequence>MSLMILGTSSHVGKSVTVAAICRIMIRQGISVAPFKSQNMSLNSYVTRDGAEIGIAQAMQAFAARVLPSALMNPVLLKPKGDSTSQVVLLGHPYKDVQIRDYYQETDHLLEIAVDAYHQLVEEYGAVIVEGAGGAAEVNLYDRDIANIRLAEHLRLPIVLVADIERGGVFAQVYGTIALLPEQIRPLVKGIIINKFRGDPTLFESGVKTLEDLTGVPVLGVIPYTRLDLPSEDSLSLQDKERQTGLVRIAVIRLPQIANFTDFELLERHAAVDYLLPGESLDGYDCIIIPGTKNTVNDLLALQASGTAAAIRDARGQGVPVIGICGGYQMLGKTVIDDGSEARKGTYEGLGLLDLVTTFEGYDKTTVQVQRTAAPVPPILDAMGTVSGYEIHMGTTVLKSGRTAFAGEGAVSDDGLVFGTYLHGLFMVPAAAEALLSYLYSQRGLTFTGIEEQNEDPYDLLADHFEAHLQMERLLTLCSDHTPETPV</sequence>
<organism>
    <name type="scientific">Methanosphaerula palustris (strain ATCC BAA-1556 / DSM 19958 / E1-9c)</name>
    <dbReference type="NCBI Taxonomy" id="521011"/>
    <lineage>
        <taxon>Archaea</taxon>
        <taxon>Methanobacteriati</taxon>
        <taxon>Methanobacteriota</taxon>
        <taxon>Stenosarchaea group</taxon>
        <taxon>Methanomicrobia</taxon>
        <taxon>Methanomicrobiales</taxon>
        <taxon>Methanoregulaceae</taxon>
        <taxon>Methanosphaerula</taxon>
    </lineage>
</organism>
<evidence type="ECO:0000255" key="1">
    <source>
        <dbReference type="HAMAP-Rule" id="MF_00028"/>
    </source>
</evidence>
<name>COBQ_METPE</name>
<proteinExistence type="inferred from homology"/>
<reference key="1">
    <citation type="journal article" date="2015" name="Genome Announc.">
        <title>Complete Genome Sequence of Methanosphaerula palustris E1-9CT, a Hydrogenotrophic Methanogen Isolated from a Minerotrophic Fen Peatland.</title>
        <authorList>
            <person name="Cadillo-Quiroz H."/>
            <person name="Browne P."/>
            <person name="Kyrpides N."/>
            <person name="Woyke T."/>
            <person name="Goodwin L."/>
            <person name="Detter C."/>
            <person name="Yavitt J.B."/>
            <person name="Zinder S.H."/>
        </authorList>
    </citation>
    <scope>NUCLEOTIDE SEQUENCE [LARGE SCALE GENOMIC DNA]</scope>
    <source>
        <strain>ATCC BAA-1556 / DSM 19958 / E1-9c</strain>
    </source>
</reference>